<comment type="function">
    <text evidence="1">Allows the formation of correctly charged Asn-tRNA(Asn) or Gln-tRNA(Gln) through the transamidation of misacylated Asp-tRNA(Asn) or Glu-tRNA(Gln) in organisms which lack either or both of asparaginyl-tRNA or glutaminyl-tRNA synthetases. The reaction takes place in the presence of glutamine and ATP through an activated phospho-Asp-tRNA(Asn) or phospho-Glu-tRNA(Gln).</text>
</comment>
<comment type="catalytic activity">
    <reaction evidence="1">
        <text>L-glutamyl-tRNA(Gln) + L-glutamine + ATP + H2O = L-glutaminyl-tRNA(Gln) + L-glutamate + ADP + phosphate + H(+)</text>
        <dbReference type="Rhea" id="RHEA:17521"/>
        <dbReference type="Rhea" id="RHEA-COMP:9681"/>
        <dbReference type="Rhea" id="RHEA-COMP:9684"/>
        <dbReference type="ChEBI" id="CHEBI:15377"/>
        <dbReference type="ChEBI" id="CHEBI:15378"/>
        <dbReference type="ChEBI" id="CHEBI:29985"/>
        <dbReference type="ChEBI" id="CHEBI:30616"/>
        <dbReference type="ChEBI" id="CHEBI:43474"/>
        <dbReference type="ChEBI" id="CHEBI:58359"/>
        <dbReference type="ChEBI" id="CHEBI:78520"/>
        <dbReference type="ChEBI" id="CHEBI:78521"/>
        <dbReference type="ChEBI" id="CHEBI:456216"/>
    </reaction>
</comment>
<comment type="catalytic activity">
    <reaction evidence="1">
        <text>L-aspartyl-tRNA(Asn) + L-glutamine + ATP + H2O = L-asparaginyl-tRNA(Asn) + L-glutamate + ADP + phosphate + 2 H(+)</text>
        <dbReference type="Rhea" id="RHEA:14513"/>
        <dbReference type="Rhea" id="RHEA-COMP:9674"/>
        <dbReference type="Rhea" id="RHEA-COMP:9677"/>
        <dbReference type="ChEBI" id="CHEBI:15377"/>
        <dbReference type="ChEBI" id="CHEBI:15378"/>
        <dbReference type="ChEBI" id="CHEBI:29985"/>
        <dbReference type="ChEBI" id="CHEBI:30616"/>
        <dbReference type="ChEBI" id="CHEBI:43474"/>
        <dbReference type="ChEBI" id="CHEBI:58359"/>
        <dbReference type="ChEBI" id="CHEBI:78515"/>
        <dbReference type="ChEBI" id="CHEBI:78516"/>
        <dbReference type="ChEBI" id="CHEBI:456216"/>
    </reaction>
</comment>
<comment type="subunit">
    <text evidence="1">Heterotrimer of A, B and C subunits.</text>
</comment>
<comment type="similarity">
    <text evidence="1">Belongs to the GatB/GatE family. GatB subfamily.</text>
</comment>
<sequence>MNWEMVIGLEVHIQLSTKSKLFSTSATKYGQHQNTQAAFLDLGLPGTLPVVNKEAIRKAVIFGLAVDAKISKDSFFARKNYFYPDLPKGYQISQSTNPIVQEGRLDIETSKGLKTIRIERAHLEEDAGKSVHGYIAGETGLDYNRAGTPLLEIVTYPDFRSAEEVVAYLKKLHQLVKHLGICDGNMQEGSFRCDVNLSIRPQGQAKFGTRAELKNINSFRFIDKAIEYEYARQVSVLESGGEVVQETRLYDADANETRSMRAKEDAFDYRYFPDPDLLPLVITDEYIESIKKQMPLKPEEREAVYREHLAEQEVEFLLSNLEIADYYDKVAVVIGYKPAYNWVTVDLISTLNRAEKEFSSDVVPAEILLEIIANVQKDIISQANAKKVIAEYIDAPSAIEAIIEKLGLKQVSDEGMIRELVQGIIAANPQQAADFKAGKTKLMSFFVGQAMKASKGKANPKQVNQIVQEELNK</sequence>
<organism>
    <name type="scientific">Francisella tularensis subsp. novicida (strain U112)</name>
    <dbReference type="NCBI Taxonomy" id="401614"/>
    <lineage>
        <taxon>Bacteria</taxon>
        <taxon>Pseudomonadati</taxon>
        <taxon>Pseudomonadota</taxon>
        <taxon>Gammaproteobacteria</taxon>
        <taxon>Thiotrichales</taxon>
        <taxon>Francisellaceae</taxon>
        <taxon>Francisella</taxon>
    </lineage>
</organism>
<protein>
    <recommendedName>
        <fullName evidence="1">Aspartyl/glutamyl-tRNA(Asn/Gln) amidotransferase subunit B</fullName>
        <shortName evidence="1">Asp/Glu-ADT subunit B</shortName>
        <ecNumber evidence="1">6.3.5.-</ecNumber>
    </recommendedName>
</protein>
<feature type="chain" id="PRO_1000015967" description="Aspartyl/glutamyl-tRNA(Asn/Gln) amidotransferase subunit B">
    <location>
        <begin position="1"/>
        <end position="473"/>
    </location>
</feature>
<name>GATB_FRATN</name>
<keyword id="KW-0067">ATP-binding</keyword>
<keyword id="KW-0436">Ligase</keyword>
<keyword id="KW-0547">Nucleotide-binding</keyword>
<keyword id="KW-0648">Protein biosynthesis</keyword>
<reference key="1">
    <citation type="journal article" date="2007" name="Genome Biol.">
        <title>Comparison of Francisella tularensis genomes reveals evolutionary events associated with the emergence of human pathogenic strains.</title>
        <authorList>
            <person name="Rohmer L."/>
            <person name="Fong C."/>
            <person name="Abmayr S."/>
            <person name="Wasnick M."/>
            <person name="Larson Freeman T.J."/>
            <person name="Radey M."/>
            <person name="Guina T."/>
            <person name="Svensson K."/>
            <person name="Hayden H.S."/>
            <person name="Jacobs M."/>
            <person name="Gallagher L.A."/>
            <person name="Manoil C."/>
            <person name="Ernst R.K."/>
            <person name="Drees B."/>
            <person name="Buckley D."/>
            <person name="Haugen E."/>
            <person name="Bovee D."/>
            <person name="Zhou Y."/>
            <person name="Chang J."/>
            <person name="Levy R."/>
            <person name="Lim R."/>
            <person name="Gillett W."/>
            <person name="Guenthener D."/>
            <person name="Kang A."/>
            <person name="Shaffer S.A."/>
            <person name="Taylor G."/>
            <person name="Chen J."/>
            <person name="Gallis B."/>
            <person name="D'Argenio D.A."/>
            <person name="Forsman M."/>
            <person name="Olson M.V."/>
            <person name="Goodlett D.R."/>
            <person name="Kaul R."/>
            <person name="Miller S.I."/>
            <person name="Brittnacher M.J."/>
        </authorList>
    </citation>
    <scope>NUCLEOTIDE SEQUENCE [LARGE SCALE GENOMIC DNA]</scope>
    <source>
        <strain>U112</strain>
    </source>
</reference>
<gene>
    <name evidence="1" type="primary">gatB</name>
    <name type="ordered locus">FTN_1689</name>
</gene>
<accession>A0Q8I1</accession>
<dbReference type="EC" id="6.3.5.-" evidence="1"/>
<dbReference type="EMBL" id="CP000439">
    <property type="protein sequence ID" value="ABK90546.1"/>
    <property type="molecule type" value="Genomic_DNA"/>
</dbReference>
<dbReference type="RefSeq" id="WP_011733731.1">
    <property type="nucleotide sequence ID" value="NC_008601.1"/>
</dbReference>
<dbReference type="SMR" id="A0Q8I1"/>
<dbReference type="KEGG" id="ftn:FTN_1689"/>
<dbReference type="KEGG" id="ftx:AW25_299"/>
<dbReference type="BioCyc" id="FTUL401614:G1G75-1749-MONOMER"/>
<dbReference type="Proteomes" id="UP000000762">
    <property type="component" value="Chromosome"/>
</dbReference>
<dbReference type="GO" id="GO:0050566">
    <property type="term" value="F:asparaginyl-tRNA synthase (glutamine-hydrolyzing) activity"/>
    <property type="evidence" value="ECO:0007669"/>
    <property type="project" value="RHEA"/>
</dbReference>
<dbReference type="GO" id="GO:0005524">
    <property type="term" value="F:ATP binding"/>
    <property type="evidence" value="ECO:0007669"/>
    <property type="project" value="UniProtKB-KW"/>
</dbReference>
<dbReference type="GO" id="GO:0050567">
    <property type="term" value="F:glutaminyl-tRNA synthase (glutamine-hydrolyzing) activity"/>
    <property type="evidence" value="ECO:0007669"/>
    <property type="project" value="UniProtKB-UniRule"/>
</dbReference>
<dbReference type="GO" id="GO:0070681">
    <property type="term" value="P:glutaminyl-tRNAGln biosynthesis via transamidation"/>
    <property type="evidence" value="ECO:0007669"/>
    <property type="project" value="TreeGrafter"/>
</dbReference>
<dbReference type="GO" id="GO:0006412">
    <property type="term" value="P:translation"/>
    <property type="evidence" value="ECO:0007669"/>
    <property type="project" value="UniProtKB-UniRule"/>
</dbReference>
<dbReference type="FunFam" id="1.10.10.410:FF:000001">
    <property type="entry name" value="Aspartyl/glutamyl-tRNA(Asn/Gln) amidotransferase subunit B"/>
    <property type="match status" value="1"/>
</dbReference>
<dbReference type="Gene3D" id="1.10.10.410">
    <property type="match status" value="1"/>
</dbReference>
<dbReference type="HAMAP" id="MF_00121">
    <property type="entry name" value="GatB"/>
    <property type="match status" value="1"/>
</dbReference>
<dbReference type="InterPro" id="IPR017959">
    <property type="entry name" value="Asn/Gln-tRNA_amidoTrfase_suB/E"/>
</dbReference>
<dbReference type="InterPro" id="IPR006075">
    <property type="entry name" value="Asn/Gln-tRNA_Trfase_suB/E_cat"/>
</dbReference>
<dbReference type="InterPro" id="IPR018027">
    <property type="entry name" value="Asn/Gln_amidotransferase"/>
</dbReference>
<dbReference type="InterPro" id="IPR003789">
    <property type="entry name" value="Asn/Gln_tRNA_amidoTrase-B-like"/>
</dbReference>
<dbReference type="InterPro" id="IPR004413">
    <property type="entry name" value="GatB"/>
</dbReference>
<dbReference type="InterPro" id="IPR023168">
    <property type="entry name" value="GatB_Yqey_C_2"/>
</dbReference>
<dbReference type="InterPro" id="IPR017958">
    <property type="entry name" value="Gln-tRNA_amidoTrfase_suB_CS"/>
</dbReference>
<dbReference type="InterPro" id="IPR014746">
    <property type="entry name" value="Gln_synth/guanido_kin_cat_dom"/>
</dbReference>
<dbReference type="NCBIfam" id="TIGR00133">
    <property type="entry name" value="gatB"/>
    <property type="match status" value="1"/>
</dbReference>
<dbReference type="NCBIfam" id="NF004012">
    <property type="entry name" value="PRK05477.1-2"/>
    <property type="match status" value="1"/>
</dbReference>
<dbReference type="NCBIfam" id="NF004014">
    <property type="entry name" value="PRK05477.1-4"/>
    <property type="match status" value="1"/>
</dbReference>
<dbReference type="PANTHER" id="PTHR11659">
    <property type="entry name" value="GLUTAMYL-TRNA GLN AMIDOTRANSFERASE SUBUNIT B MITOCHONDRIAL AND PROKARYOTIC PET112-RELATED"/>
    <property type="match status" value="1"/>
</dbReference>
<dbReference type="PANTHER" id="PTHR11659:SF0">
    <property type="entry name" value="GLUTAMYL-TRNA(GLN) AMIDOTRANSFERASE SUBUNIT B, MITOCHONDRIAL"/>
    <property type="match status" value="1"/>
</dbReference>
<dbReference type="Pfam" id="PF02934">
    <property type="entry name" value="GatB_N"/>
    <property type="match status" value="1"/>
</dbReference>
<dbReference type="Pfam" id="PF02637">
    <property type="entry name" value="GatB_Yqey"/>
    <property type="match status" value="1"/>
</dbReference>
<dbReference type="SMART" id="SM00845">
    <property type="entry name" value="GatB_Yqey"/>
    <property type="match status" value="1"/>
</dbReference>
<dbReference type="SUPFAM" id="SSF89095">
    <property type="entry name" value="GatB/YqeY motif"/>
    <property type="match status" value="1"/>
</dbReference>
<dbReference type="SUPFAM" id="SSF55931">
    <property type="entry name" value="Glutamine synthetase/guanido kinase"/>
    <property type="match status" value="1"/>
</dbReference>
<dbReference type="PROSITE" id="PS01234">
    <property type="entry name" value="GATB"/>
    <property type="match status" value="1"/>
</dbReference>
<proteinExistence type="inferred from homology"/>
<evidence type="ECO:0000255" key="1">
    <source>
        <dbReference type="HAMAP-Rule" id="MF_00121"/>
    </source>
</evidence>